<reference key="1">
    <citation type="journal article" date="2010" name="Arch. Microbiol.">
        <title>Evidence from the structure and function of cytochromes c(2) that nonsulfur purple bacterial photosynthesis followed the evolution of oxygen respiration.</title>
        <authorList>
            <person name="Meyer T."/>
            <person name="Van Driessche G."/>
            <person name="Ambler R."/>
            <person name="Kyndt J."/>
            <person name="Devreese B."/>
            <person name="Van Beeumen J."/>
            <person name="Cusanovich M."/>
        </authorList>
    </citation>
    <scope>PROTEIN SEQUENCE</scope>
    <scope>SUBCELLULAR LOCATION</scope>
</reference>
<dbReference type="SMR" id="P86324"/>
<dbReference type="GO" id="GO:0042597">
    <property type="term" value="C:periplasmic space"/>
    <property type="evidence" value="ECO:0007669"/>
    <property type="project" value="UniProtKB-SubCell"/>
</dbReference>
<dbReference type="GO" id="GO:0009055">
    <property type="term" value="F:electron transfer activity"/>
    <property type="evidence" value="ECO:0007669"/>
    <property type="project" value="InterPro"/>
</dbReference>
<dbReference type="GO" id="GO:0020037">
    <property type="term" value="F:heme binding"/>
    <property type="evidence" value="ECO:0007669"/>
    <property type="project" value="InterPro"/>
</dbReference>
<dbReference type="GO" id="GO:0046872">
    <property type="term" value="F:metal ion binding"/>
    <property type="evidence" value="ECO:0007669"/>
    <property type="project" value="UniProtKB-KW"/>
</dbReference>
<dbReference type="GO" id="GO:0015979">
    <property type="term" value="P:photosynthesis"/>
    <property type="evidence" value="ECO:0007669"/>
    <property type="project" value="UniProtKB-KW"/>
</dbReference>
<dbReference type="Gene3D" id="1.10.760.10">
    <property type="entry name" value="Cytochrome c-like domain"/>
    <property type="match status" value="1"/>
</dbReference>
<dbReference type="InterPro" id="IPR009056">
    <property type="entry name" value="Cyt_c-like_dom"/>
</dbReference>
<dbReference type="InterPro" id="IPR036909">
    <property type="entry name" value="Cyt_c-like_dom_sf"/>
</dbReference>
<dbReference type="InterPro" id="IPR002327">
    <property type="entry name" value="Cyt_c_1A/1B"/>
</dbReference>
<dbReference type="PANTHER" id="PTHR11961">
    <property type="entry name" value="CYTOCHROME C"/>
    <property type="match status" value="1"/>
</dbReference>
<dbReference type="Pfam" id="PF00034">
    <property type="entry name" value="Cytochrom_C"/>
    <property type="match status" value="1"/>
</dbReference>
<dbReference type="PRINTS" id="PR00604">
    <property type="entry name" value="CYTCHRMECIAB"/>
</dbReference>
<dbReference type="SUPFAM" id="SSF46626">
    <property type="entry name" value="Cytochrome c"/>
    <property type="match status" value="1"/>
</dbReference>
<dbReference type="PROSITE" id="PS51007">
    <property type="entry name" value="CYTC"/>
    <property type="match status" value="1"/>
</dbReference>
<comment type="function">
    <text evidence="6">Cytochrome c2 is found mainly in purple, non-sulfur, photosynthetic bacteria where it functions as the electron donor to the oxidized bacteriochlorophyll in the photophosphorylation pathway. However, it may also have a role in the respiratory chain and is found in some non-photosynthetic bacteria.</text>
</comment>
<comment type="subcellular location">
    <subcellularLocation>
        <location evidence="5">Periplasm</location>
    </subcellularLocation>
</comment>
<comment type="PTM">
    <text evidence="1">Binds 1 heme c group covalently per subunit.</text>
</comment>
<comment type="similarity">
    <text evidence="3">Belongs to the cytochrome c family.</text>
</comment>
<proteinExistence type="evidence at protein level"/>
<feature type="chain" id="PRO_0000380713" description="Cytochrome c2">
    <location>
        <begin position="1"/>
        <end position="98"/>
    </location>
</feature>
<feature type="binding site" description="covalent" evidence="1 4">
    <location>
        <position position="10"/>
    </location>
    <ligand>
        <name>heme c</name>
        <dbReference type="ChEBI" id="CHEBI:61717"/>
    </ligand>
</feature>
<feature type="binding site" description="covalent" evidence="1 4">
    <location>
        <position position="13"/>
    </location>
    <ligand>
        <name>heme c</name>
        <dbReference type="ChEBI" id="CHEBI:61717"/>
    </ligand>
</feature>
<feature type="binding site" description="axial binding residue" evidence="1 4">
    <location>
        <position position="14"/>
    </location>
    <ligand>
        <name>heme c</name>
        <dbReference type="ChEBI" id="CHEBI:61717"/>
    </ligand>
    <ligandPart>
        <name>Fe</name>
        <dbReference type="ChEBI" id="CHEBI:18248"/>
    </ligandPart>
</feature>
<feature type="binding site" description="axial binding residue" evidence="1 4">
    <location>
        <position position="76"/>
    </location>
    <ligand>
        <name>heme c</name>
        <dbReference type="ChEBI" id="CHEBI:61717"/>
    </ligand>
    <ligandPart>
        <name>Fe</name>
        <dbReference type="ChEBI" id="CHEBI:18248"/>
    </ligandPart>
</feature>
<feature type="modified residue" description="Pyrrolidone carboxylic acid" evidence="2">
    <location>
        <position position="1"/>
    </location>
</feature>
<keyword id="KW-0903">Direct protein sequencing</keyword>
<keyword id="KW-0249">Electron transport</keyword>
<keyword id="KW-0349">Heme</keyword>
<keyword id="KW-0408">Iron</keyword>
<keyword id="KW-0479">Metal-binding</keyword>
<keyword id="KW-0574">Periplasm</keyword>
<keyword id="KW-0602">Photosynthesis</keyword>
<keyword id="KW-0873">Pyrrolidone carboxylic acid</keyword>
<keyword id="KW-0813">Transport</keyword>
<accession>P86324</accession>
<protein>
    <recommendedName>
        <fullName evidence="1">Cytochrome c2</fullName>
    </recommendedName>
</protein>
<organism>
    <name type="scientific">Rhodoplanes tepidamans</name>
    <name type="common">Rhodoplanes cryptolactis</name>
    <dbReference type="NCBI Taxonomy" id="200616"/>
    <lineage>
        <taxon>Bacteria</taxon>
        <taxon>Pseudomonadati</taxon>
        <taxon>Pseudomonadota</taxon>
        <taxon>Alphaproteobacteria</taxon>
        <taxon>Hyphomicrobiales</taxon>
        <taxon>Hyphomicrobiaceae</taxon>
        <taxon>Rhodoplanes</taxon>
    </lineage>
</organism>
<name>CYC23_RHOTP</name>
<evidence type="ECO:0000250" key="1">
    <source>
        <dbReference type="UniProtKB" id="P00083"/>
    </source>
</evidence>
<evidence type="ECO:0000250" key="2">
    <source>
        <dbReference type="UniProtKB" id="P0C0X8"/>
    </source>
</evidence>
<evidence type="ECO:0000255" key="3"/>
<evidence type="ECO:0000255" key="4">
    <source>
        <dbReference type="PROSITE-ProRule" id="PRU00433"/>
    </source>
</evidence>
<evidence type="ECO:0000269" key="5">
    <source>
    </source>
</evidence>
<evidence type="ECO:0000305" key="6"/>
<sequence length="98" mass="10607">QEAPKAFNQCQACHKVEAGEDGVGPSLFGLFGHKLGQAPGFKYSEAHLKFAQQTVDEPFLTKYLADPKASLPGNKMVFAGLKNPDDVKAVLAYLKTIK</sequence>